<comment type="function">
    <text evidence="1">Catalyzes the phosphorylation of the 3'-hydroxyl group of dephosphocoenzyme A to form coenzyme A.</text>
</comment>
<comment type="catalytic activity">
    <reaction evidence="1">
        <text>3'-dephospho-CoA + ATP = ADP + CoA + H(+)</text>
        <dbReference type="Rhea" id="RHEA:18245"/>
        <dbReference type="ChEBI" id="CHEBI:15378"/>
        <dbReference type="ChEBI" id="CHEBI:30616"/>
        <dbReference type="ChEBI" id="CHEBI:57287"/>
        <dbReference type="ChEBI" id="CHEBI:57328"/>
        <dbReference type="ChEBI" id="CHEBI:456216"/>
        <dbReference type="EC" id="2.7.1.24"/>
    </reaction>
</comment>
<comment type="pathway">
    <text evidence="1">Cofactor biosynthesis; coenzyme A biosynthesis; CoA from (R)-pantothenate: step 5/5.</text>
</comment>
<comment type="subcellular location">
    <subcellularLocation>
        <location evidence="1">Cytoplasm</location>
    </subcellularLocation>
</comment>
<comment type="similarity">
    <text evidence="1">Belongs to the CoaE family.</text>
</comment>
<organism>
    <name type="scientific">Wolinella succinogenes (strain ATCC 29543 / DSM 1740 / CCUG 13145 / JCM 31913 / LMG 7466 / NCTC 11488 / FDC 602W)</name>
    <name type="common">Vibrio succinogenes</name>
    <dbReference type="NCBI Taxonomy" id="273121"/>
    <lineage>
        <taxon>Bacteria</taxon>
        <taxon>Pseudomonadati</taxon>
        <taxon>Campylobacterota</taxon>
        <taxon>Epsilonproteobacteria</taxon>
        <taxon>Campylobacterales</taxon>
        <taxon>Helicobacteraceae</taxon>
        <taxon>Wolinella</taxon>
    </lineage>
</organism>
<reference key="1">
    <citation type="journal article" date="2003" name="Proc. Natl. Acad. Sci. U.S.A.">
        <title>Complete genome sequence and analysis of Wolinella succinogenes.</title>
        <authorList>
            <person name="Baar C."/>
            <person name="Eppinger M."/>
            <person name="Raddatz G."/>
            <person name="Simon J."/>
            <person name="Lanz C."/>
            <person name="Klimmek O."/>
            <person name="Nandakumar R."/>
            <person name="Gross R."/>
            <person name="Rosinus A."/>
            <person name="Keller H."/>
            <person name="Jagtap P."/>
            <person name="Linke B."/>
            <person name="Meyer F."/>
            <person name="Lederer H."/>
            <person name="Schuster S.C."/>
        </authorList>
    </citation>
    <scope>NUCLEOTIDE SEQUENCE [LARGE SCALE GENOMIC DNA]</scope>
    <source>
        <strain>ATCC 29543 / DSM 1740 / CCUG 13145 / JCM 31913 / LMG 7466 / NCTC 11488 / FDC 602W</strain>
    </source>
</reference>
<feature type="chain" id="PRO_0000173033" description="Dephospho-CoA kinase">
    <location>
        <begin position="1"/>
        <end position="201"/>
    </location>
</feature>
<feature type="domain" description="DPCK" evidence="1">
    <location>
        <begin position="7"/>
        <end position="201"/>
    </location>
</feature>
<feature type="binding site" evidence="1">
    <location>
        <begin position="15"/>
        <end position="20"/>
    </location>
    <ligand>
        <name>ATP</name>
        <dbReference type="ChEBI" id="CHEBI:30616"/>
    </ligand>
</feature>
<protein>
    <recommendedName>
        <fullName evidence="1">Dephospho-CoA kinase</fullName>
        <ecNumber evidence="1">2.7.1.24</ecNumber>
    </recommendedName>
    <alternativeName>
        <fullName evidence="1">Dephosphocoenzyme A kinase</fullName>
    </alternativeName>
</protein>
<gene>
    <name evidence="1" type="primary">coaE</name>
    <name type="ordered locus">WS2149</name>
</gene>
<keyword id="KW-0067">ATP-binding</keyword>
<keyword id="KW-0173">Coenzyme A biosynthesis</keyword>
<keyword id="KW-0963">Cytoplasm</keyword>
<keyword id="KW-0418">Kinase</keyword>
<keyword id="KW-0547">Nucleotide-binding</keyword>
<keyword id="KW-1185">Reference proteome</keyword>
<keyword id="KW-0808">Transferase</keyword>
<evidence type="ECO:0000255" key="1">
    <source>
        <dbReference type="HAMAP-Rule" id="MF_00376"/>
    </source>
</evidence>
<accession>Q7M7Q5</accession>
<dbReference type="EC" id="2.7.1.24" evidence="1"/>
<dbReference type="EMBL" id="BX571662">
    <property type="protein sequence ID" value="CAE11143.1"/>
    <property type="molecule type" value="Genomic_DNA"/>
</dbReference>
<dbReference type="RefSeq" id="WP_011139925.1">
    <property type="nucleotide sequence ID" value="NC_005090.1"/>
</dbReference>
<dbReference type="SMR" id="Q7M7Q5"/>
<dbReference type="STRING" id="273121.WS2149"/>
<dbReference type="KEGG" id="wsu:WS2149"/>
<dbReference type="eggNOG" id="COG0237">
    <property type="taxonomic scope" value="Bacteria"/>
</dbReference>
<dbReference type="HOGENOM" id="CLU_057180_0_0_7"/>
<dbReference type="UniPathway" id="UPA00241">
    <property type="reaction ID" value="UER00356"/>
</dbReference>
<dbReference type="Proteomes" id="UP000000422">
    <property type="component" value="Chromosome"/>
</dbReference>
<dbReference type="GO" id="GO:0005737">
    <property type="term" value="C:cytoplasm"/>
    <property type="evidence" value="ECO:0007669"/>
    <property type="project" value="UniProtKB-SubCell"/>
</dbReference>
<dbReference type="GO" id="GO:0005524">
    <property type="term" value="F:ATP binding"/>
    <property type="evidence" value="ECO:0007669"/>
    <property type="project" value="UniProtKB-UniRule"/>
</dbReference>
<dbReference type="GO" id="GO:0004140">
    <property type="term" value="F:dephospho-CoA kinase activity"/>
    <property type="evidence" value="ECO:0007669"/>
    <property type="project" value="UniProtKB-UniRule"/>
</dbReference>
<dbReference type="GO" id="GO:0015937">
    <property type="term" value="P:coenzyme A biosynthetic process"/>
    <property type="evidence" value="ECO:0007669"/>
    <property type="project" value="UniProtKB-UniRule"/>
</dbReference>
<dbReference type="CDD" id="cd02022">
    <property type="entry name" value="DPCK"/>
    <property type="match status" value="1"/>
</dbReference>
<dbReference type="Gene3D" id="3.40.50.300">
    <property type="entry name" value="P-loop containing nucleotide triphosphate hydrolases"/>
    <property type="match status" value="1"/>
</dbReference>
<dbReference type="HAMAP" id="MF_00376">
    <property type="entry name" value="Dephospho_CoA_kinase"/>
    <property type="match status" value="1"/>
</dbReference>
<dbReference type="InterPro" id="IPR001977">
    <property type="entry name" value="Depp_CoAkinase"/>
</dbReference>
<dbReference type="InterPro" id="IPR027417">
    <property type="entry name" value="P-loop_NTPase"/>
</dbReference>
<dbReference type="NCBIfam" id="TIGR00152">
    <property type="entry name" value="dephospho-CoA kinase"/>
    <property type="match status" value="1"/>
</dbReference>
<dbReference type="PANTHER" id="PTHR10695:SF46">
    <property type="entry name" value="BIFUNCTIONAL COENZYME A SYNTHASE-RELATED"/>
    <property type="match status" value="1"/>
</dbReference>
<dbReference type="PANTHER" id="PTHR10695">
    <property type="entry name" value="DEPHOSPHO-COA KINASE-RELATED"/>
    <property type="match status" value="1"/>
</dbReference>
<dbReference type="Pfam" id="PF01121">
    <property type="entry name" value="CoaE"/>
    <property type="match status" value="1"/>
</dbReference>
<dbReference type="SUPFAM" id="SSF52540">
    <property type="entry name" value="P-loop containing nucleoside triphosphate hydrolases"/>
    <property type="match status" value="1"/>
</dbReference>
<dbReference type="PROSITE" id="PS51219">
    <property type="entry name" value="DPCK"/>
    <property type="match status" value="1"/>
</dbReference>
<name>COAE_WOLSU</name>
<proteinExistence type="inferred from homology"/>
<sequence>MESLHYAIALSGGIGTGKSTVASLLRLYGFEVIDADSIAHRLLKEKQKEVVDLFGEGILKEGEIDRKSLGARVFGDPKERARLEALLHPPIRQEILQKAQKLEAKAFPYFIDIPLFFEKRDDYPMVNQTLLIYAPRKLQVERIKKRDSLSMEEIEARLGAQMDIKEKVPMAHYILSNEGNLNDLTQEVERLIETIKKDFHV</sequence>